<feature type="chain" id="PRO_0000251619" description="Large ribosomal subunit protein uL16">
    <location>
        <begin position="1"/>
        <end position="138"/>
    </location>
</feature>
<feature type="region of interest" description="Disordered" evidence="2">
    <location>
        <begin position="1"/>
        <end position="20"/>
    </location>
</feature>
<feature type="compositionally biased region" description="Basic residues" evidence="2">
    <location>
        <begin position="1"/>
        <end position="13"/>
    </location>
</feature>
<protein>
    <recommendedName>
        <fullName evidence="1">Large ribosomal subunit protein uL16</fullName>
    </recommendedName>
    <alternativeName>
        <fullName evidence="3">50S ribosomal protein L16</fullName>
    </alternativeName>
</protein>
<comment type="function">
    <text evidence="1">Binds 23S rRNA and is also seen to make contacts with the A and possibly P site tRNAs.</text>
</comment>
<comment type="subunit">
    <text evidence="1">Part of the 50S ribosomal subunit.</text>
</comment>
<comment type="similarity">
    <text evidence="1">Belongs to the universal ribosomal protein uL16 family.</text>
</comment>
<accession>Q2L2B8</accession>
<proteinExistence type="inferred from homology"/>
<sequence>MLQPSRRKYRKEQKGRNTGLATRGAQVSFGEFGLKATGRGRLTARQIEAARRAINRHIKRGGRIWIRIFPDKPISQKPAEVRMGNGKGNPEYWVAEIQPGKVLYEMEGVSEELAREAFRLAAAKLPISTTFVARHIGA</sequence>
<gene>
    <name evidence="1" type="primary">rplP</name>
    <name type="ordered locus">BAV0032</name>
</gene>
<name>RL16_BORA1</name>
<reference key="1">
    <citation type="journal article" date="2006" name="J. Bacteriol.">
        <title>Comparison of the genome sequence of the poultry pathogen Bordetella avium with those of B. bronchiseptica, B. pertussis, and B. parapertussis reveals extensive diversity in surface structures associated with host interaction.</title>
        <authorList>
            <person name="Sebaihia M."/>
            <person name="Preston A."/>
            <person name="Maskell D.J."/>
            <person name="Kuzmiak H."/>
            <person name="Connell T.D."/>
            <person name="King N.D."/>
            <person name="Orndorff P.E."/>
            <person name="Miyamoto D.M."/>
            <person name="Thomson N.R."/>
            <person name="Harris D."/>
            <person name="Goble A."/>
            <person name="Lord A."/>
            <person name="Murphy L."/>
            <person name="Quail M.A."/>
            <person name="Rutter S."/>
            <person name="Squares R."/>
            <person name="Squares S."/>
            <person name="Woodward J."/>
            <person name="Parkhill J."/>
            <person name="Temple L.M."/>
        </authorList>
    </citation>
    <scope>NUCLEOTIDE SEQUENCE [LARGE SCALE GENOMIC DNA]</scope>
    <source>
        <strain>197N</strain>
    </source>
</reference>
<dbReference type="EMBL" id="AM167904">
    <property type="protein sequence ID" value="CAJ47616.1"/>
    <property type="molecule type" value="Genomic_DNA"/>
</dbReference>
<dbReference type="RefSeq" id="WP_012415739.1">
    <property type="nucleotide sequence ID" value="NC_010645.1"/>
</dbReference>
<dbReference type="SMR" id="Q2L2B8"/>
<dbReference type="STRING" id="360910.BAV0032"/>
<dbReference type="GeneID" id="92936723"/>
<dbReference type="KEGG" id="bav:BAV0032"/>
<dbReference type="eggNOG" id="COG0197">
    <property type="taxonomic scope" value="Bacteria"/>
</dbReference>
<dbReference type="HOGENOM" id="CLU_078858_2_1_4"/>
<dbReference type="OrthoDB" id="9802589at2"/>
<dbReference type="Proteomes" id="UP000001977">
    <property type="component" value="Chromosome"/>
</dbReference>
<dbReference type="GO" id="GO:0022625">
    <property type="term" value="C:cytosolic large ribosomal subunit"/>
    <property type="evidence" value="ECO:0007669"/>
    <property type="project" value="TreeGrafter"/>
</dbReference>
<dbReference type="GO" id="GO:0019843">
    <property type="term" value="F:rRNA binding"/>
    <property type="evidence" value="ECO:0007669"/>
    <property type="project" value="UniProtKB-UniRule"/>
</dbReference>
<dbReference type="GO" id="GO:0003735">
    <property type="term" value="F:structural constituent of ribosome"/>
    <property type="evidence" value="ECO:0007669"/>
    <property type="project" value="InterPro"/>
</dbReference>
<dbReference type="GO" id="GO:0000049">
    <property type="term" value="F:tRNA binding"/>
    <property type="evidence" value="ECO:0007669"/>
    <property type="project" value="UniProtKB-KW"/>
</dbReference>
<dbReference type="GO" id="GO:0006412">
    <property type="term" value="P:translation"/>
    <property type="evidence" value="ECO:0007669"/>
    <property type="project" value="UniProtKB-UniRule"/>
</dbReference>
<dbReference type="CDD" id="cd01433">
    <property type="entry name" value="Ribosomal_L16_L10e"/>
    <property type="match status" value="1"/>
</dbReference>
<dbReference type="FunFam" id="3.90.1170.10:FF:000001">
    <property type="entry name" value="50S ribosomal protein L16"/>
    <property type="match status" value="1"/>
</dbReference>
<dbReference type="Gene3D" id="3.90.1170.10">
    <property type="entry name" value="Ribosomal protein L10e/L16"/>
    <property type="match status" value="1"/>
</dbReference>
<dbReference type="HAMAP" id="MF_01342">
    <property type="entry name" value="Ribosomal_uL16"/>
    <property type="match status" value="1"/>
</dbReference>
<dbReference type="InterPro" id="IPR047873">
    <property type="entry name" value="Ribosomal_uL16"/>
</dbReference>
<dbReference type="InterPro" id="IPR000114">
    <property type="entry name" value="Ribosomal_uL16_bact-type"/>
</dbReference>
<dbReference type="InterPro" id="IPR020798">
    <property type="entry name" value="Ribosomal_uL16_CS"/>
</dbReference>
<dbReference type="InterPro" id="IPR016180">
    <property type="entry name" value="Ribosomal_uL16_dom"/>
</dbReference>
<dbReference type="InterPro" id="IPR036920">
    <property type="entry name" value="Ribosomal_uL16_sf"/>
</dbReference>
<dbReference type="NCBIfam" id="TIGR01164">
    <property type="entry name" value="rplP_bact"/>
    <property type="match status" value="1"/>
</dbReference>
<dbReference type="PANTHER" id="PTHR12220">
    <property type="entry name" value="50S/60S RIBOSOMAL PROTEIN L16"/>
    <property type="match status" value="1"/>
</dbReference>
<dbReference type="PANTHER" id="PTHR12220:SF13">
    <property type="entry name" value="LARGE RIBOSOMAL SUBUNIT PROTEIN UL16M"/>
    <property type="match status" value="1"/>
</dbReference>
<dbReference type="Pfam" id="PF00252">
    <property type="entry name" value="Ribosomal_L16"/>
    <property type="match status" value="1"/>
</dbReference>
<dbReference type="PRINTS" id="PR00060">
    <property type="entry name" value="RIBOSOMALL16"/>
</dbReference>
<dbReference type="SUPFAM" id="SSF54686">
    <property type="entry name" value="Ribosomal protein L16p/L10e"/>
    <property type="match status" value="1"/>
</dbReference>
<dbReference type="PROSITE" id="PS00586">
    <property type="entry name" value="RIBOSOMAL_L16_1"/>
    <property type="match status" value="1"/>
</dbReference>
<dbReference type="PROSITE" id="PS00701">
    <property type="entry name" value="RIBOSOMAL_L16_2"/>
    <property type="match status" value="1"/>
</dbReference>
<organism>
    <name type="scientific">Bordetella avium (strain 197N)</name>
    <dbReference type="NCBI Taxonomy" id="360910"/>
    <lineage>
        <taxon>Bacteria</taxon>
        <taxon>Pseudomonadati</taxon>
        <taxon>Pseudomonadota</taxon>
        <taxon>Betaproteobacteria</taxon>
        <taxon>Burkholderiales</taxon>
        <taxon>Alcaligenaceae</taxon>
        <taxon>Bordetella</taxon>
    </lineage>
</organism>
<evidence type="ECO:0000255" key="1">
    <source>
        <dbReference type="HAMAP-Rule" id="MF_01342"/>
    </source>
</evidence>
<evidence type="ECO:0000256" key="2">
    <source>
        <dbReference type="SAM" id="MobiDB-lite"/>
    </source>
</evidence>
<evidence type="ECO:0000305" key="3"/>
<keyword id="KW-1185">Reference proteome</keyword>
<keyword id="KW-0687">Ribonucleoprotein</keyword>
<keyword id="KW-0689">Ribosomal protein</keyword>
<keyword id="KW-0694">RNA-binding</keyword>
<keyword id="KW-0699">rRNA-binding</keyword>
<keyword id="KW-0820">tRNA-binding</keyword>